<evidence type="ECO:0000250" key="1"/>
<evidence type="ECO:0000269" key="2">
    <source>
    </source>
</evidence>
<evidence type="ECO:0000269" key="3">
    <source>
    </source>
</evidence>
<evidence type="ECO:0000269" key="4">
    <source ref="6"/>
</evidence>
<evidence type="ECO:0000305" key="5"/>
<accession>Q9UIV8</accession>
<accession>A8K2Q8</accession>
<accession>Q3MII2</accession>
<accession>Q9HCX1</accession>
<accession>Q9UBW1</accession>
<accession>Q9UKG0</accession>
<dbReference type="EMBL" id="AJ001696">
    <property type="protein sequence ID" value="CAA04935.2"/>
    <property type="molecule type" value="mRNA"/>
</dbReference>
<dbReference type="EMBL" id="AJ001697">
    <property type="protein sequence ID" value="CAA04936.2"/>
    <property type="molecule type" value="mRNA"/>
</dbReference>
<dbReference type="EMBL" id="AJ001698">
    <property type="protein sequence ID" value="CAA04937.1"/>
    <property type="molecule type" value="mRNA"/>
</dbReference>
<dbReference type="EMBL" id="AF169949">
    <property type="protein sequence ID" value="AAD55765.1"/>
    <property type="molecule type" value="mRNA"/>
</dbReference>
<dbReference type="EMBL" id="AF216854">
    <property type="protein sequence ID" value="AAF72879.1"/>
    <property type="molecule type" value="Genomic_DNA"/>
</dbReference>
<dbReference type="EMBL" id="AJ278717">
    <property type="protein sequence ID" value="CAC03569.1"/>
    <property type="molecule type" value="Genomic_DNA"/>
</dbReference>
<dbReference type="EMBL" id="AK290323">
    <property type="protein sequence ID" value="BAF83012.1"/>
    <property type="molecule type" value="mRNA"/>
</dbReference>
<dbReference type="EMBL" id="AK313486">
    <property type="protein sequence ID" value="BAG36269.1"/>
    <property type="molecule type" value="mRNA"/>
</dbReference>
<dbReference type="EMBL" id="CH471096">
    <property type="protein sequence ID" value="EAW63153.1"/>
    <property type="molecule type" value="Genomic_DNA"/>
</dbReference>
<dbReference type="EMBL" id="BC101821">
    <property type="protein sequence ID" value="AAI01822.1"/>
    <property type="molecule type" value="mRNA"/>
</dbReference>
<dbReference type="CCDS" id="CCDS11985.1">
    <molecule id="Q9UIV8-1"/>
</dbReference>
<dbReference type="PIR" id="JC7118">
    <property type="entry name" value="JC7118"/>
</dbReference>
<dbReference type="RefSeq" id="NP_001294852.1">
    <property type="nucleotide sequence ID" value="NM_001307923.1"/>
</dbReference>
<dbReference type="RefSeq" id="NP_036529.1">
    <molecule id="Q9UIV8-1"/>
    <property type="nucleotide sequence ID" value="NM_012397.4"/>
</dbReference>
<dbReference type="SMR" id="Q9UIV8"/>
<dbReference type="BioGRID" id="111293">
    <property type="interactions" value="127"/>
</dbReference>
<dbReference type="FunCoup" id="Q9UIV8">
    <property type="interactions" value="265"/>
</dbReference>
<dbReference type="IntAct" id="Q9UIV8">
    <property type="interactions" value="77"/>
</dbReference>
<dbReference type="STRING" id="9606.ENSP00000269489"/>
<dbReference type="MEROPS" id="I04.017"/>
<dbReference type="iPTMnet" id="Q9UIV8"/>
<dbReference type="PhosphoSitePlus" id="Q9UIV8"/>
<dbReference type="BioMuta" id="SERPINB13"/>
<dbReference type="DMDM" id="12643252"/>
<dbReference type="jPOST" id="Q9UIV8"/>
<dbReference type="MassIVE" id="Q9UIV8"/>
<dbReference type="PaxDb" id="9606-ENSP00000341584"/>
<dbReference type="PeptideAtlas" id="Q9UIV8"/>
<dbReference type="PRIDE" id="Q9UIV8"/>
<dbReference type="ProteomicsDB" id="84570">
    <molecule id="Q9UIV8-1"/>
</dbReference>
<dbReference type="ProteomicsDB" id="84571">
    <molecule id="Q9UIV8-2"/>
</dbReference>
<dbReference type="Pumba" id="Q9UIV8"/>
<dbReference type="Antibodypedia" id="10046">
    <property type="antibodies" value="236 antibodies from 29 providers"/>
</dbReference>
<dbReference type="DNASU" id="5275"/>
<dbReference type="Ensembl" id="ENST00000344731.10">
    <molecule id="Q9UIV8-1"/>
    <property type="protein sequence ID" value="ENSP00000341584.6"/>
    <property type="gene ID" value="ENSG00000197641.12"/>
</dbReference>
<dbReference type="GeneID" id="5275"/>
<dbReference type="KEGG" id="hsa:5275"/>
<dbReference type="MANE-Select" id="ENST00000344731.10">
    <property type="protein sequence ID" value="ENSP00000341584.6"/>
    <property type="RefSeq nucleotide sequence ID" value="NM_012397.4"/>
    <property type="RefSeq protein sequence ID" value="NP_036529.1"/>
</dbReference>
<dbReference type="UCSC" id="uc002ljc.4">
    <molecule id="Q9UIV8-1"/>
    <property type="organism name" value="human"/>
</dbReference>
<dbReference type="AGR" id="HGNC:8944"/>
<dbReference type="CTD" id="5275"/>
<dbReference type="DisGeNET" id="5275"/>
<dbReference type="GeneCards" id="SERPINB13"/>
<dbReference type="HGNC" id="HGNC:8944">
    <property type="gene designation" value="SERPINB13"/>
</dbReference>
<dbReference type="HPA" id="ENSG00000197641">
    <property type="expression patterns" value="Tissue enhanced (cervix, esophagus, vagina)"/>
</dbReference>
<dbReference type="MIM" id="604445">
    <property type="type" value="gene"/>
</dbReference>
<dbReference type="neXtProt" id="NX_Q9UIV8"/>
<dbReference type="OpenTargets" id="ENSG00000197641"/>
<dbReference type="PharmGKB" id="PA35512"/>
<dbReference type="VEuPathDB" id="HostDB:ENSG00000197641"/>
<dbReference type="eggNOG" id="KOG2392">
    <property type="taxonomic scope" value="Eukaryota"/>
</dbReference>
<dbReference type="GeneTree" id="ENSGT00940000162214"/>
<dbReference type="HOGENOM" id="CLU_023330_0_2_1"/>
<dbReference type="InParanoid" id="Q9UIV8"/>
<dbReference type="OMA" id="RSGLHAQ"/>
<dbReference type="OrthoDB" id="671595at2759"/>
<dbReference type="PAN-GO" id="Q9UIV8">
    <property type="GO annotations" value="1 GO annotation based on evolutionary models"/>
</dbReference>
<dbReference type="PhylomeDB" id="Q9UIV8"/>
<dbReference type="TreeFam" id="TF352619"/>
<dbReference type="PathwayCommons" id="Q9UIV8"/>
<dbReference type="Reactome" id="R-HSA-8939242">
    <property type="pathway name" value="RUNX1 regulates transcription of genes involved in differentiation of keratinocytes"/>
</dbReference>
<dbReference type="SignaLink" id="Q9UIV8"/>
<dbReference type="BioGRID-ORCS" id="5275">
    <property type="hits" value="9 hits in 1148 CRISPR screens"/>
</dbReference>
<dbReference type="ChiTaRS" id="SERPINB13">
    <property type="organism name" value="human"/>
</dbReference>
<dbReference type="GeneWiki" id="SERPINB13"/>
<dbReference type="GenomeRNAi" id="5275"/>
<dbReference type="Pharos" id="Q9UIV8">
    <property type="development level" value="Tbio"/>
</dbReference>
<dbReference type="PRO" id="PR:Q9UIV8"/>
<dbReference type="Proteomes" id="UP000005640">
    <property type="component" value="Chromosome 18"/>
</dbReference>
<dbReference type="RNAct" id="Q9UIV8">
    <property type="molecule type" value="protein"/>
</dbReference>
<dbReference type="Bgee" id="ENSG00000197641">
    <property type="expression patterns" value="Expressed in tongue squamous epithelium and 111 other cell types or tissues"/>
</dbReference>
<dbReference type="ExpressionAtlas" id="Q9UIV8">
    <property type="expression patterns" value="baseline and differential"/>
</dbReference>
<dbReference type="GO" id="GO:0005737">
    <property type="term" value="C:cytoplasm"/>
    <property type="evidence" value="ECO:0000314"/>
    <property type="project" value="UniProtKB"/>
</dbReference>
<dbReference type="GO" id="GO:0005829">
    <property type="term" value="C:cytosol"/>
    <property type="evidence" value="ECO:0000314"/>
    <property type="project" value="HPA"/>
</dbReference>
<dbReference type="GO" id="GO:0070062">
    <property type="term" value="C:extracellular exosome"/>
    <property type="evidence" value="ECO:0007005"/>
    <property type="project" value="UniProtKB"/>
</dbReference>
<dbReference type="GO" id="GO:0005615">
    <property type="term" value="C:extracellular space"/>
    <property type="evidence" value="ECO:0000318"/>
    <property type="project" value="GO_Central"/>
</dbReference>
<dbReference type="GO" id="GO:0043202">
    <property type="term" value="C:lysosomal lumen"/>
    <property type="evidence" value="ECO:0000304"/>
    <property type="project" value="Reactome"/>
</dbReference>
<dbReference type="GO" id="GO:0016607">
    <property type="term" value="C:nuclear speck"/>
    <property type="evidence" value="ECO:0000314"/>
    <property type="project" value="HPA"/>
</dbReference>
<dbReference type="GO" id="GO:0005654">
    <property type="term" value="C:nucleoplasm"/>
    <property type="evidence" value="ECO:0000314"/>
    <property type="project" value="UniProtKB"/>
</dbReference>
<dbReference type="GO" id="GO:0004869">
    <property type="term" value="F:cysteine-type endopeptidase inhibitor activity"/>
    <property type="evidence" value="ECO:0000314"/>
    <property type="project" value="UniProtKB"/>
</dbReference>
<dbReference type="GO" id="GO:0002020">
    <property type="term" value="F:protease binding"/>
    <property type="evidence" value="ECO:0000353"/>
    <property type="project" value="UniProtKB"/>
</dbReference>
<dbReference type="GO" id="GO:0004867">
    <property type="term" value="F:serine-type endopeptidase inhibitor activity"/>
    <property type="evidence" value="ECO:0000303"/>
    <property type="project" value="UniProtKB"/>
</dbReference>
<dbReference type="GO" id="GO:0010951">
    <property type="term" value="P:negative regulation of endopeptidase activity"/>
    <property type="evidence" value="ECO:0000314"/>
    <property type="project" value="UniProtKB"/>
</dbReference>
<dbReference type="GO" id="GO:1902173">
    <property type="term" value="P:negative regulation of keratinocyte apoptotic process"/>
    <property type="evidence" value="ECO:0000315"/>
    <property type="project" value="UniProtKB"/>
</dbReference>
<dbReference type="GO" id="GO:0030162">
    <property type="term" value="P:regulation of proteolysis"/>
    <property type="evidence" value="ECO:0000303"/>
    <property type="project" value="UniProtKB"/>
</dbReference>
<dbReference type="GO" id="GO:0009411">
    <property type="term" value="P:response to UV"/>
    <property type="evidence" value="ECO:0000304"/>
    <property type="project" value="ProtInc"/>
</dbReference>
<dbReference type="CDD" id="cd19572">
    <property type="entry name" value="serpinB13_headpin"/>
    <property type="match status" value="1"/>
</dbReference>
<dbReference type="FunFam" id="2.30.39.10:FF:000071">
    <property type="entry name" value="Serpin B3"/>
    <property type="match status" value="1"/>
</dbReference>
<dbReference type="FunFam" id="3.30.497.10:FF:000098">
    <property type="entry name" value="Serpin family B member 13"/>
    <property type="match status" value="1"/>
</dbReference>
<dbReference type="Gene3D" id="2.30.39.10">
    <property type="entry name" value="Alpha-1-antitrypsin, domain 1"/>
    <property type="match status" value="1"/>
</dbReference>
<dbReference type="Gene3D" id="3.30.497.10">
    <property type="entry name" value="Antithrombin, subunit I, domain 2"/>
    <property type="match status" value="1"/>
</dbReference>
<dbReference type="InterPro" id="IPR023795">
    <property type="entry name" value="Serpin_CS"/>
</dbReference>
<dbReference type="InterPro" id="IPR023796">
    <property type="entry name" value="Serpin_dom"/>
</dbReference>
<dbReference type="InterPro" id="IPR000215">
    <property type="entry name" value="Serpin_fam"/>
</dbReference>
<dbReference type="InterPro" id="IPR036186">
    <property type="entry name" value="Serpin_sf"/>
</dbReference>
<dbReference type="InterPro" id="IPR042178">
    <property type="entry name" value="Serpin_sf_1"/>
</dbReference>
<dbReference type="InterPro" id="IPR042185">
    <property type="entry name" value="Serpin_sf_2"/>
</dbReference>
<dbReference type="PANTHER" id="PTHR11461">
    <property type="entry name" value="SERINE PROTEASE INHIBITOR, SERPIN"/>
    <property type="match status" value="1"/>
</dbReference>
<dbReference type="PANTHER" id="PTHR11461:SF161">
    <property type="entry name" value="SERPIN B13"/>
    <property type="match status" value="1"/>
</dbReference>
<dbReference type="Pfam" id="PF00079">
    <property type="entry name" value="Serpin"/>
    <property type="match status" value="1"/>
</dbReference>
<dbReference type="SMART" id="SM00093">
    <property type="entry name" value="SERPIN"/>
    <property type="match status" value="1"/>
</dbReference>
<dbReference type="SUPFAM" id="SSF56574">
    <property type="entry name" value="Serpins"/>
    <property type="match status" value="1"/>
</dbReference>
<dbReference type="PROSITE" id="PS00284">
    <property type="entry name" value="SERPIN"/>
    <property type="match status" value="1"/>
</dbReference>
<proteinExistence type="evidence at protein level"/>
<keyword id="KW-0025">Alternative splicing</keyword>
<keyword id="KW-0963">Cytoplasm</keyword>
<keyword id="KW-0646">Protease inhibitor</keyword>
<keyword id="KW-1267">Proteomics identification</keyword>
<keyword id="KW-1185">Reference proteome</keyword>
<keyword id="KW-0722">Serine protease inhibitor</keyword>
<organism>
    <name type="scientific">Homo sapiens</name>
    <name type="common">Human</name>
    <dbReference type="NCBI Taxonomy" id="9606"/>
    <lineage>
        <taxon>Eukaryota</taxon>
        <taxon>Metazoa</taxon>
        <taxon>Chordata</taxon>
        <taxon>Craniata</taxon>
        <taxon>Vertebrata</taxon>
        <taxon>Euteleostomi</taxon>
        <taxon>Mammalia</taxon>
        <taxon>Eutheria</taxon>
        <taxon>Euarchontoglires</taxon>
        <taxon>Primates</taxon>
        <taxon>Haplorrhini</taxon>
        <taxon>Catarrhini</taxon>
        <taxon>Hominidae</taxon>
        <taxon>Homo</taxon>
    </lineage>
</organism>
<comment type="function">
    <text>May play a role in the proliferation or differentiation of keratinocytes.</text>
</comment>
<comment type="interaction">
    <interactant intactId="EBI-3048588">
        <id>Q9UIV8</id>
    </interactant>
    <interactant intactId="EBI-80426">
        <id>Q15700</id>
        <label>DLG2</label>
    </interactant>
    <organismsDiffer>false</organismsDiffer>
    <experiments>3</experiments>
</comment>
<comment type="subcellular location">
    <subcellularLocation>
        <location>Cytoplasm</location>
    </subcellularLocation>
</comment>
<comment type="alternative products">
    <event type="alternative splicing"/>
    <isoform>
        <id>Q9UIV8-1</id>
        <name>1</name>
        <sequence type="displayed"/>
    </isoform>
    <isoform>
        <id>Q9UIV8-2</id>
        <name>2</name>
        <sequence type="described" ref="VSP_006058"/>
    </isoform>
</comment>
<comment type="tissue specificity">
    <text>Skin specific.</text>
</comment>
<comment type="similarity">
    <text evidence="5">Belongs to the serpin family. Ov-serpin subfamily.</text>
</comment>
<name>SPB13_HUMAN</name>
<reference key="1">
    <citation type="journal article" date="1999" name="J. Mol. Biol.">
        <title>Cloning and characterization of hurpin (Protease Inhibitor 13): a new skin specific, UV-repressible serine proteinase inhibitor of the ovalbumin serpin family.</title>
        <authorList>
            <person name="Abts H.F."/>
            <person name="Welss T."/>
            <person name="Mirmohammadsadegh A."/>
            <person name="Koehrer K."/>
            <person name="Michel G."/>
            <person name="Ruzicka T."/>
        </authorList>
    </citation>
    <scope>NUCLEOTIDE SEQUENCE [MRNA] (ISOFORM 1)</scope>
    <source>
        <tissue>Skin</tissue>
    </source>
</reference>
<reference key="2">
    <citation type="journal article" date="1999" name="Biochem. Biophys. Res. Commun.">
        <title>Identification and cDNA cloning of headpin, a novel differentially expressed serpin that maps to chromosome 18q.</title>
        <authorList>
            <person name="Spring P."/>
            <person name="Nakashima T."/>
            <person name="Frederick M."/>
            <person name="Henderson Y."/>
            <person name="Clayman G."/>
        </authorList>
    </citation>
    <scope>NUCLEOTIDE SEQUENCE [MRNA] (ISOFORM 1)</scope>
    <scope>VARIANT SER-293</scope>
</reference>
<reference key="3">
    <citation type="journal article" date="2000" name="Biochim. Biophys. Acta">
        <title>Genomic cloning, mapping, structure and promoter analysis of HEADPIN, a serpin which is down-regulated in head and neck cancer cells.</title>
        <authorList>
            <person name="Nakashima T."/>
            <person name="Pak S.C."/>
            <person name="Silverman G.A."/>
            <person name="Spring P.M."/>
            <person name="Frederick M.J."/>
            <person name="Clayman G.L."/>
        </authorList>
    </citation>
    <scope>NUCLEOTIDE SEQUENCE [GENOMIC DNA] (ISOFORM 1)</scope>
</reference>
<reference key="4">
    <citation type="journal article" date="2001" name="DNA Cell Biol.">
        <title>Sequence, organization, chromosomal localization and alternative splicing of the human serine protease inhibitor gene hurpin (PI13), which is up-regulated in psoriasis.</title>
        <authorList>
            <person name="Abts H.F."/>
            <person name="Welss T."/>
            <person name="Scheuring S."/>
            <person name="Scott F.L."/>
            <person name="Irving J.A."/>
            <person name="Michel G."/>
            <person name="Bird P.I."/>
            <person name="Ruzicka T."/>
        </authorList>
    </citation>
    <scope>NUCLEOTIDE SEQUENCE [GENOMIC DNA] (ISOFORM 2)</scope>
    <source>
        <tissue>Placenta</tissue>
    </source>
</reference>
<reference key="5">
    <citation type="journal article" date="2004" name="Nat. Genet.">
        <title>Complete sequencing and characterization of 21,243 full-length human cDNAs.</title>
        <authorList>
            <person name="Ota T."/>
            <person name="Suzuki Y."/>
            <person name="Nishikawa T."/>
            <person name="Otsuki T."/>
            <person name="Sugiyama T."/>
            <person name="Irie R."/>
            <person name="Wakamatsu A."/>
            <person name="Hayashi K."/>
            <person name="Sato H."/>
            <person name="Nagai K."/>
            <person name="Kimura K."/>
            <person name="Makita H."/>
            <person name="Sekine M."/>
            <person name="Obayashi M."/>
            <person name="Nishi T."/>
            <person name="Shibahara T."/>
            <person name="Tanaka T."/>
            <person name="Ishii S."/>
            <person name="Yamamoto J."/>
            <person name="Saito K."/>
            <person name="Kawai Y."/>
            <person name="Isono Y."/>
            <person name="Nakamura Y."/>
            <person name="Nagahari K."/>
            <person name="Murakami K."/>
            <person name="Yasuda T."/>
            <person name="Iwayanagi T."/>
            <person name="Wagatsuma M."/>
            <person name="Shiratori A."/>
            <person name="Sudo H."/>
            <person name="Hosoiri T."/>
            <person name="Kaku Y."/>
            <person name="Kodaira H."/>
            <person name="Kondo H."/>
            <person name="Sugawara M."/>
            <person name="Takahashi M."/>
            <person name="Kanda K."/>
            <person name="Yokoi T."/>
            <person name="Furuya T."/>
            <person name="Kikkawa E."/>
            <person name="Omura Y."/>
            <person name="Abe K."/>
            <person name="Kamihara K."/>
            <person name="Katsuta N."/>
            <person name="Sato K."/>
            <person name="Tanikawa M."/>
            <person name="Yamazaki M."/>
            <person name="Ninomiya K."/>
            <person name="Ishibashi T."/>
            <person name="Yamashita H."/>
            <person name="Murakawa K."/>
            <person name="Fujimori K."/>
            <person name="Tanai H."/>
            <person name="Kimata M."/>
            <person name="Watanabe M."/>
            <person name="Hiraoka S."/>
            <person name="Chiba Y."/>
            <person name="Ishida S."/>
            <person name="Ono Y."/>
            <person name="Takiguchi S."/>
            <person name="Watanabe S."/>
            <person name="Yosida M."/>
            <person name="Hotuta T."/>
            <person name="Kusano J."/>
            <person name="Kanehori K."/>
            <person name="Takahashi-Fujii A."/>
            <person name="Hara H."/>
            <person name="Tanase T.-O."/>
            <person name="Nomura Y."/>
            <person name="Togiya S."/>
            <person name="Komai F."/>
            <person name="Hara R."/>
            <person name="Takeuchi K."/>
            <person name="Arita M."/>
            <person name="Imose N."/>
            <person name="Musashino K."/>
            <person name="Yuuki H."/>
            <person name="Oshima A."/>
            <person name="Sasaki N."/>
            <person name="Aotsuka S."/>
            <person name="Yoshikawa Y."/>
            <person name="Matsunawa H."/>
            <person name="Ichihara T."/>
            <person name="Shiohata N."/>
            <person name="Sano S."/>
            <person name="Moriya S."/>
            <person name="Momiyama H."/>
            <person name="Satoh N."/>
            <person name="Takami S."/>
            <person name="Terashima Y."/>
            <person name="Suzuki O."/>
            <person name="Nakagawa S."/>
            <person name="Senoh A."/>
            <person name="Mizoguchi H."/>
            <person name="Goto Y."/>
            <person name="Shimizu F."/>
            <person name="Wakebe H."/>
            <person name="Hishigaki H."/>
            <person name="Watanabe T."/>
            <person name="Sugiyama A."/>
            <person name="Takemoto M."/>
            <person name="Kawakami B."/>
            <person name="Yamazaki M."/>
            <person name="Watanabe K."/>
            <person name="Kumagai A."/>
            <person name="Itakura S."/>
            <person name="Fukuzumi Y."/>
            <person name="Fujimori Y."/>
            <person name="Komiyama M."/>
            <person name="Tashiro H."/>
            <person name="Tanigami A."/>
            <person name="Fujiwara T."/>
            <person name="Ono T."/>
            <person name="Yamada K."/>
            <person name="Fujii Y."/>
            <person name="Ozaki K."/>
            <person name="Hirao M."/>
            <person name="Ohmori Y."/>
            <person name="Kawabata A."/>
            <person name="Hikiji T."/>
            <person name="Kobatake N."/>
            <person name="Inagaki H."/>
            <person name="Ikema Y."/>
            <person name="Okamoto S."/>
            <person name="Okitani R."/>
            <person name="Kawakami T."/>
            <person name="Noguchi S."/>
            <person name="Itoh T."/>
            <person name="Shigeta K."/>
            <person name="Senba T."/>
            <person name="Matsumura K."/>
            <person name="Nakajima Y."/>
            <person name="Mizuno T."/>
            <person name="Morinaga M."/>
            <person name="Sasaki M."/>
            <person name="Togashi T."/>
            <person name="Oyama M."/>
            <person name="Hata H."/>
            <person name="Watanabe M."/>
            <person name="Komatsu T."/>
            <person name="Mizushima-Sugano J."/>
            <person name="Satoh T."/>
            <person name="Shirai Y."/>
            <person name="Takahashi Y."/>
            <person name="Nakagawa K."/>
            <person name="Okumura K."/>
            <person name="Nagase T."/>
            <person name="Nomura N."/>
            <person name="Kikuchi H."/>
            <person name="Masuho Y."/>
            <person name="Yamashita R."/>
            <person name="Nakai K."/>
            <person name="Yada T."/>
            <person name="Nakamura Y."/>
            <person name="Ohara O."/>
            <person name="Isogai T."/>
            <person name="Sugano S."/>
        </authorList>
    </citation>
    <scope>NUCLEOTIDE SEQUENCE [LARGE SCALE MRNA]</scope>
    <scope>VARIANT SER-293</scope>
    <source>
        <tissue>Tongue</tissue>
    </source>
</reference>
<reference key="6">
    <citation type="submission" date="2005-07" db="EMBL/GenBank/DDBJ databases">
        <authorList>
            <person name="Mural R.J."/>
            <person name="Istrail S."/>
            <person name="Sutton G."/>
            <person name="Florea L."/>
            <person name="Halpern A.L."/>
            <person name="Mobarry C.M."/>
            <person name="Lippert R."/>
            <person name="Walenz B."/>
            <person name="Shatkay H."/>
            <person name="Dew I."/>
            <person name="Miller J.R."/>
            <person name="Flanigan M.J."/>
            <person name="Edwards N.J."/>
            <person name="Bolanos R."/>
            <person name="Fasulo D."/>
            <person name="Halldorsson B.V."/>
            <person name="Hannenhalli S."/>
            <person name="Turner R."/>
            <person name="Yooseph S."/>
            <person name="Lu F."/>
            <person name="Nusskern D.R."/>
            <person name="Shue B.C."/>
            <person name="Zheng X.H."/>
            <person name="Zhong F."/>
            <person name="Delcher A.L."/>
            <person name="Huson D.H."/>
            <person name="Kravitz S.A."/>
            <person name="Mouchard L."/>
            <person name="Reinert K."/>
            <person name="Remington K.A."/>
            <person name="Clark A.G."/>
            <person name="Waterman M.S."/>
            <person name="Eichler E.E."/>
            <person name="Adams M.D."/>
            <person name="Hunkapiller M.W."/>
            <person name="Myers E.W."/>
            <person name="Venter J.C."/>
        </authorList>
    </citation>
    <scope>NUCLEOTIDE SEQUENCE [LARGE SCALE GENOMIC DNA]</scope>
    <scope>VARIANT SER-293</scope>
</reference>
<reference key="7">
    <citation type="journal article" date="2004" name="Genome Res.">
        <title>The status, quality, and expansion of the NIH full-length cDNA project: the Mammalian Gene Collection (MGC).</title>
        <authorList>
            <consortium name="The MGC Project Team"/>
        </authorList>
    </citation>
    <scope>NUCLEOTIDE SEQUENCE [LARGE SCALE MRNA] (ISOFORM 1)</scope>
</reference>
<reference key="8">
    <citation type="journal article" date="2011" name="BMC Syst. Biol.">
        <title>Initial characterization of the human central proteome.</title>
        <authorList>
            <person name="Burkard T.R."/>
            <person name="Planyavsky M."/>
            <person name="Kaupe I."/>
            <person name="Breitwieser F.P."/>
            <person name="Buerckstuemmer T."/>
            <person name="Bennett K.L."/>
            <person name="Superti-Furga G."/>
            <person name="Colinge J."/>
        </authorList>
    </citation>
    <scope>IDENTIFICATION BY MASS SPECTROMETRY [LARGE SCALE ANALYSIS]</scope>
</reference>
<feature type="chain" id="PRO_0000094121" description="Serpin B13">
    <location>
        <begin position="1"/>
        <end position="391"/>
    </location>
</feature>
<feature type="site" description="Reactive bond" evidence="1">
    <location>
        <begin position="356"/>
        <end position="357"/>
    </location>
</feature>
<feature type="splice variant" id="VSP_006058" description="In isoform 2." evidence="5">
    <location>
        <begin position="206"/>
        <end position="257"/>
    </location>
</feature>
<feature type="sequence variant" id="VAR_024356" description="In dbSNP:rs1020694." evidence="2 3 4">
    <original>G</original>
    <variation>S</variation>
    <location>
        <position position="293"/>
    </location>
</feature>
<feature type="sequence conflict" description="In Ref. 4; CAC03569." evidence="5" ref="4">
    <original>S</original>
    <variation>N</variation>
    <location>
        <position position="8"/>
    </location>
</feature>
<feature type="sequence conflict" description="In Ref. 1; CAA04937." evidence="5" ref="1">
    <location>
        <position position="75"/>
    </location>
</feature>
<feature type="sequence conflict" description="In Ref. 1; CAA04937." evidence="5" ref="1">
    <original>E</original>
    <variation>Q</variation>
    <location>
        <position position="297"/>
    </location>
</feature>
<sequence>MDSLGAVSTRLGFDLFKELKKTNDGNIFFSPVGILTAIGMVLLGTRGATASQLEEVFHSEKETKSSRIKAEEKEVIENTEAVHQQFQKFLTEISKLTNDYELNITNRLFGEKTYLFLQKYLDYVEKYYHASLEPVDFVNAADESRKKINSWVESKTNEKIKDLFPDGSISSSTKLVLVNMVYFKGQWDREFKKENTKEEKFWMNKSTSKSVQMMTQSHSFSFTFLEDLQAKILGIPYKNNDLSMFVLLPNDIDGLEKIIDKISPEKLVEWTSPGHMEERKVNLHLPRFEVEDGYDLEAVLAAMGMGDAFSEHKADYSGMSSGSGLYAQKFLHSSFVAVTEEGTEAAAATGIGFTVTSAPGHENVHCNHPFLFFIRHNESNSILFFGRFSSP</sequence>
<gene>
    <name type="primary">SERPINB13</name>
    <name type="synonym">PI13</name>
</gene>
<protein>
    <recommendedName>
        <fullName>Serpin B13</fullName>
    </recommendedName>
    <alternativeName>
        <fullName>HaCaT UV-repressible serpin</fullName>
        <shortName>Hurpin</shortName>
    </alternativeName>
    <alternativeName>
        <fullName>Headpin</fullName>
    </alternativeName>
    <alternativeName>
        <fullName>Peptidase inhibitor 13</fullName>
        <shortName>PI-13</shortName>
    </alternativeName>
    <alternativeName>
        <fullName>Proteinase inhibitor 13</fullName>
    </alternativeName>
</protein>